<evidence type="ECO:0000255" key="1">
    <source>
        <dbReference type="HAMAP-Rule" id="MF_00140"/>
    </source>
</evidence>
<comment type="function">
    <text evidence="1">Catalyzes the attachment of tryptophan to tRNA(Trp).</text>
</comment>
<comment type="catalytic activity">
    <reaction evidence="1">
        <text>tRNA(Trp) + L-tryptophan + ATP = L-tryptophyl-tRNA(Trp) + AMP + diphosphate + H(+)</text>
        <dbReference type="Rhea" id="RHEA:24080"/>
        <dbReference type="Rhea" id="RHEA-COMP:9671"/>
        <dbReference type="Rhea" id="RHEA-COMP:9705"/>
        <dbReference type="ChEBI" id="CHEBI:15378"/>
        <dbReference type="ChEBI" id="CHEBI:30616"/>
        <dbReference type="ChEBI" id="CHEBI:33019"/>
        <dbReference type="ChEBI" id="CHEBI:57912"/>
        <dbReference type="ChEBI" id="CHEBI:78442"/>
        <dbReference type="ChEBI" id="CHEBI:78535"/>
        <dbReference type="ChEBI" id="CHEBI:456215"/>
        <dbReference type="EC" id="6.1.1.2"/>
    </reaction>
</comment>
<comment type="subunit">
    <text evidence="1">Homodimer.</text>
</comment>
<comment type="subcellular location">
    <subcellularLocation>
        <location evidence="1">Cytoplasm</location>
    </subcellularLocation>
</comment>
<comment type="similarity">
    <text evidence="1">Belongs to the class-I aminoacyl-tRNA synthetase family.</text>
</comment>
<protein>
    <recommendedName>
        <fullName evidence="1">Tryptophan--tRNA ligase</fullName>
        <ecNumber evidence="1">6.1.1.2</ecNumber>
    </recommendedName>
    <alternativeName>
        <fullName evidence="1">Tryptophanyl-tRNA synthetase</fullName>
        <shortName evidence="1">TrpRS</shortName>
    </alternativeName>
</protein>
<sequence>MSKPIVLSGVQPSGELSIGNYLGALRQWQQMQDDYDCQYCVVDLHAITVRQDPKALHEATLDALAICLAVGVDPKKSTLFVQSHVPEHAQLGWLLNCYTQMGELSRMTQFKDKSARHSNDVNVGLFDYPVLMAADILLYGAHQVPVGSDQKQHLELARDIATRFNNIYSPEAPIFTVPEPYIPQVNARVMSLQDATKKMSKSDDNRKNVITLLEEPKSILKKINKAQTDAEMPPRIAHDWENKAGISNLMGLYSAATGKTFEEIEAQYQGVEMYGPFKKDVGEAIVTMLEPIQEEYKRIREDRAYMDAVMKAGAEKASERAAVTLKKAYEAVGFVTRP</sequence>
<gene>
    <name evidence="1" type="primary">trpS</name>
    <name type="ordered locus">VF_2286</name>
</gene>
<feature type="chain" id="PRO_0000136706" description="Tryptophan--tRNA ligase">
    <location>
        <begin position="1"/>
        <end position="338"/>
    </location>
</feature>
<feature type="short sequence motif" description="'HIGH' region" evidence="1">
    <location>
        <begin position="12"/>
        <end position="20"/>
    </location>
</feature>
<feature type="short sequence motif" description="'KMSKS' region" evidence="1">
    <location>
        <begin position="198"/>
        <end position="202"/>
    </location>
</feature>
<feature type="binding site" evidence="1">
    <location>
        <begin position="11"/>
        <end position="13"/>
    </location>
    <ligand>
        <name>ATP</name>
        <dbReference type="ChEBI" id="CHEBI:30616"/>
    </ligand>
</feature>
<feature type="binding site" evidence="1">
    <location>
        <begin position="19"/>
        <end position="20"/>
    </location>
    <ligand>
        <name>ATP</name>
        <dbReference type="ChEBI" id="CHEBI:30616"/>
    </ligand>
</feature>
<feature type="binding site" evidence="1">
    <location>
        <position position="135"/>
    </location>
    <ligand>
        <name>L-tryptophan</name>
        <dbReference type="ChEBI" id="CHEBI:57912"/>
    </ligand>
</feature>
<feature type="binding site" evidence="1">
    <location>
        <begin position="147"/>
        <end position="149"/>
    </location>
    <ligand>
        <name>ATP</name>
        <dbReference type="ChEBI" id="CHEBI:30616"/>
    </ligand>
</feature>
<feature type="binding site" evidence="1">
    <location>
        <position position="189"/>
    </location>
    <ligand>
        <name>ATP</name>
        <dbReference type="ChEBI" id="CHEBI:30616"/>
    </ligand>
</feature>
<feature type="binding site" evidence="1">
    <location>
        <begin position="198"/>
        <end position="202"/>
    </location>
    <ligand>
        <name>ATP</name>
        <dbReference type="ChEBI" id="CHEBI:30616"/>
    </ligand>
</feature>
<dbReference type="EC" id="6.1.1.2" evidence="1"/>
<dbReference type="EMBL" id="CP000020">
    <property type="protein sequence ID" value="AAW86781.1"/>
    <property type="molecule type" value="Genomic_DNA"/>
</dbReference>
<dbReference type="RefSeq" id="WP_005421081.1">
    <property type="nucleotide sequence ID" value="NZ_CAWLES010000001.1"/>
</dbReference>
<dbReference type="RefSeq" id="YP_205669.1">
    <property type="nucleotide sequence ID" value="NC_006840.2"/>
</dbReference>
<dbReference type="SMR" id="Q5E2G5"/>
<dbReference type="STRING" id="312309.VF_2286"/>
<dbReference type="EnsemblBacteria" id="AAW86781">
    <property type="protein sequence ID" value="AAW86781"/>
    <property type="gene ID" value="VF_2286"/>
</dbReference>
<dbReference type="GeneID" id="54165001"/>
<dbReference type="KEGG" id="vfi:VF_2286"/>
<dbReference type="PATRIC" id="fig|312309.11.peg.2324"/>
<dbReference type="eggNOG" id="COG0180">
    <property type="taxonomic scope" value="Bacteria"/>
</dbReference>
<dbReference type="HOGENOM" id="CLU_029244_1_2_6"/>
<dbReference type="OrthoDB" id="9801042at2"/>
<dbReference type="Proteomes" id="UP000000537">
    <property type="component" value="Chromosome I"/>
</dbReference>
<dbReference type="GO" id="GO:0005829">
    <property type="term" value="C:cytosol"/>
    <property type="evidence" value="ECO:0007669"/>
    <property type="project" value="TreeGrafter"/>
</dbReference>
<dbReference type="GO" id="GO:0005524">
    <property type="term" value="F:ATP binding"/>
    <property type="evidence" value="ECO:0007669"/>
    <property type="project" value="UniProtKB-UniRule"/>
</dbReference>
<dbReference type="GO" id="GO:0004830">
    <property type="term" value="F:tryptophan-tRNA ligase activity"/>
    <property type="evidence" value="ECO:0007669"/>
    <property type="project" value="UniProtKB-UniRule"/>
</dbReference>
<dbReference type="GO" id="GO:0006436">
    <property type="term" value="P:tryptophanyl-tRNA aminoacylation"/>
    <property type="evidence" value="ECO:0007669"/>
    <property type="project" value="UniProtKB-UniRule"/>
</dbReference>
<dbReference type="CDD" id="cd00806">
    <property type="entry name" value="TrpRS_core"/>
    <property type="match status" value="1"/>
</dbReference>
<dbReference type="FunFam" id="1.10.240.10:FF:000002">
    <property type="entry name" value="Tryptophan--tRNA ligase"/>
    <property type="match status" value="1"/>
</dbReference>
<dbReference type="FunFam" id="3.40.50.620:FF:000024">
    <property type="entry name" value="Tryptophan--tRNA ligase"/>
    <property type="match status" value="1"/>
</dbReference>
<dbReference type="Gene3D" id="3.40.50.620">
    <property type="entry name" value="HUPs"/>
    <property type="match status" value="1"/>
</dbReference>
<dbReference type="Gene3D" id="1.10.240.10">
    <property type="entry name" value="Tyrosyl-Transfer RNA Synthetase"/>
    <property type="match status" value="1"/>
</dbReference>
<dbReference type="HAMAP" id="MF_00140_B">
    <property type="entry name" value="Trp_tRNA_synth_B"/>
    <property type="match status" value="1"/>
</dbReference>
<dbReference type="InterPro" id="IPR002305">
    <property type="entry name" value="aa-tRNA-synth_Ic"/>
</dbReference>
<dbReference type="InterPro" id="IPR014729">
    <property type="entry name" value="Rossmann-like_a/b/a_fold"/>
</dbReference>
<dbReference type="InterPro" id="IPR002306">
    <property type="entry name" value="Trp-tRNA-ligase"/>
</dbReference>
<dbReference type="InterPro" id="IPR024109">
    <property type="entry name" value="Trp-tRNA-ligase_bac-type"/>
</dbReference>
<dbReference type="InterPro" id="IPR050203">
    <property type="entry name" value="Trp-tRNA_synthetase"/>
</dbReference>
<dbReference type="NCBIfam" id="TIGR00233">
    <property type="entry name" value="trpS"/>
    <property type="match status" value="1"/>
</dbReference>
<dbReference type="PANTHER" id="PTHR43766">
    <property type="entry name" value="TRYPTOPHAN--TRNA LIGASE, MITOCHONDRIAL"/>
    <property type="match status" value="1"/>
</dbReference>
<dbReference type="PANTHER" id="PTHR43766:SF1">
    <property type="entry name" value="TRYPTOPHAN--TRNA LIGASE, MITOCHONDRIAL"/>
    <property type="match status" value="1"/>
</dbReference>
<dbReference type="Pfam" id="PF00579">
    <property type="entry name" value="tRNA-synt_1b"/>
    <property type="match status" value="1"/>
</dbReference>
<dbReference type="PRINTS" id="PR01039">
    <property type="entry name" value="TRNASYNTHTRP"/>
</dbReference>
<dbReference type="SUPFAM" id="SSF52374">
    <property type="entry name" value="Nucleotidylyl transferase"/>
    <property type="match status" value="1"/>
</dbReference>
<reference key="1">
    <citation type="journal article" date="2005" name="Proc. Natl. Acad. Sci. U.S.A.">
        <title>Complete genome sequence of Vibrio fischeri: a symbiotic bacterium with pathogenic congeners.</title>
        <authorList>
            <person name="Ruby E.G."/>
            <person name="Urbanowski M."/>
            <person name="Campbell J."/>
            <person name="Dunn A."/>
            <person name="Faini M."/>
            <person name="Gunsalus R."/>
            <person name="Lostroh P."/>
            <person name="Lupp C."/>
            <person name="McCann J."/>
            <person name="Millikan D."/>
            <person name="Schaefer A."/>
            <person name="Stabb E."/>
            <person name="Stevens A."/>
            <person name="Visick K."/>
            <person name="Whistler C."/>
            <person name="Greenberg E.P."/>
        </authorList>
    </citation>
    <scope>NUCLEOTIDE SEQUENCE [LARGE SCALE GENOMIC DNA]</scope>
    <source>
        <strain>ATCC 700601 / ES114</strain>
    </source>
</reference>
<proteinExistence type="inferred from homology"/>
<organism>
    <name type="scientific">Aliivibrio fischeri (strain ATCC 700601 / ES114)</name>
    <name type="common">Vibrio fischeri</name>
    <dbReference type="NCBI Taxonomy" id="312309"/>
    <lineage>
        <taxon>Bacteria</taxon>
        <taxon>Pseudomonadati</taxon>
        <taxon>Pseudomonadota</taxon>
        <taxon>Gammaproteobacteria</taxon>
        <taxon>Vibrionales</taxon>
        <taxon>Vibrionaceae</taxon>
        <taxon>Aliivibrio</taxon>
    </lineage>
</organism>
<keyword id="KW-0030">Aminoacyl-tRNA synthetase</keyword>
<keyword id="KW-0067">ATP-binding</keyword>
<keyword id="KW-0963">Cytoplasm</keyword>
<keyword id="KW-0436">Ligase</keyword>
<keyword id="KW-0547">Nucleotide-binding</keyword>
<keyword id="KW-0648">Protein biosynthesis</keyword>
<keyword id="KW-1185">Reference proteome</keyword>
<accession>Q5E2G5</accession>
<name>SYW_ALIF1</name>